<evidence type="ECO:0000255" key="1">
    <source>
        <dbReference type="HAMAP-Rule" id="MF_00791"/>
    </source>
</evidence>
<accession>B0TV51</accession>
<dbReference type="EMBL" id="CP000931">
    <property type="protein sequence ID" value="ABZ75489.1"/>
    <property type="molecule type" value="Genomic_DNA"/>
</dbReference>
<dbReference type="RefSeq" id="WP_012276039.1">
    <property type="nucleotide sequence ID" value="NC_010334.1"/>
</dbReference>
<dbReference type="SMR" id="B0TV51"/>
<dbReference type="STRING" id="458817.Shal_0914"/>
<dbReference type="KEGG" id="shl:Shal_0914"/>
<dbReference type="eggNOG" id="COG2967">
    <property type="taxonomic scope" value="Bacteria"/>
</dbReference>
<dbReference type="HOGENOM" id="CLU_128074_0_0_6"/>
<dbReference type="OrthoDB" id="9795226at2"/>
<dbReference type="Proteomes" id="UP000001317">
    <property type="component" value="Chromosome"/>
</dbReference>
<dbReference type="Gene3D" id="2.60.40.1470">
    <property type="entry name" value="ApaG domain"/>
    <property type="match status" value="1"/>
</dbReference>
<dbReference type="HAMAP" id="MF_00791">
    <property type="entry name" value="ApaG"/>
    <property type="match status" value="1"/>
</dbReference>
<dbReference type="InterPro" id="IPR050718">
    <property type="entry name" value="ApaG-like"/>
</dbReference>
<dbReference type="InterPro" id="IPR007474">
    <property type="entry name" value="ApaG_domain"/>
</dbReference>
<dbReference type="InterPro" id="IPR036767">
    <property type="entry name" value="ApaG_sf"/>
</dbReference>
<dbReference type="InterPro" id="IPR023065">
    <property type="entry name" value="Uncharacterised_ApaG"/>
</dbReference>
<dbReference type="NCBIfam" id="NF003967">
    <property type="entry name" value="PRK05461.1"/>
    <property type="match status" value="1"/>
</dbReference>
<dbReference type="PANTHER" id="PTHR47191">
    <property type="entry name" value="OS05G0170800 PROTEIN"/>
    <property type="match status" value="1"/>
</dbReference>
<dbReference type="PANTHER" id="PTHR47191:SF2">
    <property type="entry name" value="OS05G0170800 PROTEIN"/>
    <property type="match status" value="1"/>
</dbReference>
<dbReference type="Pfam" id="PF04379">
    <property type="entry name" value="DUF525"/>
    <property type="match status" value="1"/>
</dbReference>
<dbReference type="SUPFAM" id="SSF110069">
    <property type="entry name" value="ApaG-like"/>
    <property type="match status" value="1"/>
</dbReference>
<dbReference type="PROSITE" id="PS51087">
    <property type="entry name" value="APAG"/>
    <property type="match status" value="1"/>
</dbReference>
<reference key="1">
    <citation type="submission" date="2008-01" db="EMBL/GenBank/DDBJ databases">
        <title>Complete sequence of Shewanella halifaxensis HAW-EB4.</title>
        <authorList>
            <consortium name="US DOE Joint Genome Institute"/>
            <person name="Copeland A."/>
            <person name="Lucas S."/>
            <person name="Lapidus A."/>
            <person name="Glavina del Rio T."/>
            <person name="Dalin E."/>
            <person name="Tice H."/>
            <person name="Bruce D."/>
            <person name="Goodwin L."/>
            <person name="Pitluck S."/>
            <person name="Sims D."/>
            <person name="Brettin T."/>
            <person name="Detter J.C."/>
            <person name="Han C."/>
            <person name="Kuske C.R."/>
            <person name="Schmutz J."/>
            <person name="Larimer F."/>
            <person name="Land M."/>
            <person name="Hauser L."/>
            <person name="Kyrpides N."/>
            <person name="Kim E."/>
            <person name="Zhao J.-S."/>
            <person name="Richardson P."/>
        </authorList>
    </citation>
    <scope>NUCLEOTIDE SEQUENCE [LARGE SCALE GENOMIC DNA]</scope>
    <source>
        <strain>HAW-EB4</strain>
    </source>
</reference>
<name>APAG_SHEHH</name>
<sequence length="126" mass="13921">MSQLTSSVRVDVKTEYIETQSSPDEDKYLFSYTITIHNLGSDDVTLKRRHWCITDSNGRKSEVHGTGVVGETPTIKPNSSYKYTSGTVLETPLGVMEGSYTMVDSNGDEFKAPISAFRLSIPGLLH</sequence>
<protein>
    <recommendedName>
        <fullName evidence="1">Protein ApaG</fullName>
    </recommendedName>
</protein>
<proteinExistence type="inferred from homology"/>
<feature type="chain" id="PRO_1000083650" description="Protein ApaG">
    <location>
        <begin position="1"/>
        <end position="126"/>
    </location>
</feature>
<feature type="domain" description="ApaG" evidence="1">
    <location>
        <begin position="2"/>
        <end position="126"/>
    </location>
</feature>
<gene>
    <name evidence="1" type="primary">apaG</name>
    <name type="ordered locus">Shal_0914</name>
</gene>
<organism>
    <name type="scientific">Shewanella halifaxensis (strain HAW-EB4)</name>
    <dbReference type="NCBI Taxonomy" id="458817"/>
    <lineage>
        <taxon>Bacteria</taxon>
        <taxon>Pseudomonadati</taxon>
        <taxon>Pseudomonadota</taxon>
        <taxon>Gammaproteobacteria</taxon>
        <taxon>Alteromonadales</taxon>
        <taxon>Shewanellaceae</taxon>
        <taxon>Shewanella</taxon>
    </lineage>
</organism>